<feature type="transit peptide" description="Mitochondrion" evidence="2">
    <location>
        <begin position="1"/>
        <end position="16"/>
    </location>
</feature>
<feature type="chain" id="PRO_0000207092" description="Probable oxidoreductase AIM17">
    <location>
        <begin position="17"/>
        <end position="465"/>
    </location>
</feature>
<feature type="binding site" evidence="1">
    <location>
        <position position="246"/>
    </location>
    <ligand>
        <name>Fe cation</name>
        <dbReference type="ChEBI" id="CHEBI:24875"/>
        <note>catalytic</note>
    </ligand>
</feature>
<feature type="binding site" evidence="1">
    <location>
        <position position="248"/>
    </location>
    <ligand>
        <name>Fe cation</name>
        <dbReference type="ChEBI" id="CHEBI:24875"/>
        <note>catalytic</note>
    </ligand>
</feature>
<feature type="binding site" evidence="1">
    <location>
        <position position="428"/>
    </location>
    <ligand>
        <name>Fe cation</name>
        <dbReference type="ChEBI" id="CHEBI:24875"/>
        <note>catalytic</note>
    </ligand>
</feature>
<dbReference type="EC" id="1.14.11.-"/>
<dbReference type="EMBL" id="U11582">
    <property type="protein sequence ID" value="AAB65074.1"/>
    <property type="molecule type" value="Genomic_DNA"/>
</dbReference>
<dbReference type="EMBL" id="J02987">
    <property type="protein sequence ID" value="AAA65531.1"/>
    <property type="molecule type" value="Genomic_DNA"/>
</dbReference>
<dbReference type="EMBL" id="BK006934">
    <property type="protein sequence ID" value="DAA06664.1"/>
    <property type="molecule type" value="Genomic_DNA"/>
</dbReference>
<dbReference type="PIR" id="S46835">
    <property type="entry name" value="S46835"/>
</dbReference>
<dbReference type="RefSeq" id="NP_011842.1">
    <property type="nucleotide sequence ID" value="NM_001179101.1"/>
</dbReference>
<dbReference type="SMR" id="P23180"/>
<dbReference type="BioGRID" id="36402">
    <property type="interactions" value="152"/>
</dbReference>
<dbReference type="DIP" id="DIP-4919N"/>
<dbReference type="FunCoup" id="P23180">
    <property type="interactions" value="868"/>
</dbReference>
<dbReference type="IntAct" id="P23180">
    <property type="interactions" value="32"/>
</dbReference>
<dbReference type="STRING" id="4932.YHL021C"/>
<dbReference type="iPTMnet" id="P23180"/>
<dbReference type="PaxDb" id="4932-YHL021C"/>
<dbReference type="PeptideAtlas" id="P23180"/>
<dbReference type="EnsemblFungi" id="YHL021C_mRNA">
    <property type="protein sequence ID" value="YHL021C"/>
    <property type="gene ID" value="YHL021C"/>
</dbReference>
<dbReference type="GeneID" id="856365"/>
<dbReference type="KEGG" id="sce:YHL021C"/>
<dbReference type="AGR" id="SGD:S000001013"/>
<dbReference type="SGD" id="S000001013">
    <property type="gene designation" value="AIM17"/>
</dbReference>
<dbReference type="VEuPathDB" id="FungiDB:YHL021C"/>
<dbReference type="eggNOG" id="KOG3888">
    <property type="taxonomic scope" value="Eukaryota"/>
</dbReference>
<dbReference type="GeneTree" id="ENSGT00530000063582"/>
<dbReference type="HOGENOM" id="CLU_021859_0_1_1"/>
<dbReference type="InParanoid" id="P23180"/>
<dbReference type="OMA" id="VHITWPN"/>
<dbReference type="OrthoDB" id="406634at2759"/>
<dbReference type="BioCyc" id="YEAST:G3O-31041-MONOMER"/>
<dbReference type="Reactome" id="R-SCE-71262">
    <property type="pathway name" value="Carnitine synthesis"/>
</dbReference>
<dbReference type="BioGRID-ORCS" id="856365">
    <property type="hits" value="0 hits in 10 CRISPR screens"/>
</dbReference>
<dbReference type="PRO" id="PR:P23180"/>
<dbReference type="Proteomes" id="UP000002311">
    <property type="component" value="Chromosome VIII"/>
</dbReference>
<dbReference type="RNAct" id="P23180">
    <property type="molecule type" value="protein"/>
</dbReference>
<dbReference type="GO" id="GO:0005739">
    <property type="term" value="C:mitochondrion"/>
    <property type="evidence" value="ECO:0007005"/>
    <property type="project" value="SGD"/>
</dbReference>
<dbReference type="GO" id="GO:0051213">
    <property type="term" value="F:dioxygenase activity"/>
    <property type="evidence" value="ECO:0007669"/>
    <property type="project" value="UniProtKB-KW"/>
</dbReference>
<dbReference type="GO" id="GO:0046872">
    <property type="term" value="F:metal ion binding"/>
    <property type="evidence" value="ECO:0007669"/>
    <property type="project" value="UniProtKB-KW"/>
</dbReference>
<dbReference type="GO" id="GO:0045329">
    <property type="term" value="P:carnitine biosynthetic process"/>
    <property type="evidence" value="ECO:0000318"/>
    <property type="project" value="GO_Central"/>
</dbReference>
<dbReference type="GO" id="GO:0007005">
    <property type="term" value="P:mitochondrion organization"/>
    <property type="evidence" value="ECO:0000315"/>
    <property type="project" value="SGD"/>
</dbReference>
<dbReference type="CDD" id="cd00250">
    <property type="entry name" value="CAS_like"/>
    <property type="match status" value="1"/>
</dbReference>
<dbReference type="FunFam" id="3.60.130.10:FF:000016">
    <property type="entry name" value="YHL021C-like protein"/>
    <property type="match status" value="1"/>
</dbReference>
<dbReference type="Gene3D" id="3.60.130.10">
    <property type="entry name" value="Clavaminate synthase-like"/>
    <property type="match status" value="1"/>
</dbReference>
<dbReference type="InterPro" id="IPR050411">
    <property type="entry name" value="AlphaKG_dependent_hydroxylases"/>
</dbReference>
<dbReference type="InterPro" id="IPR042098">
    <property type="entry name" value="TauD-like_sf"/>
</dbReference>
<dbReference type="InterPro" id="IPR003819">
    <property type="entry name" value="TauD/TfdA-like"/>
</dbReference>
<dbReference type="PANTHER" id="PTHR10696">
    <property type="entry name" value="GAMMA-BUTYROBETAINE HYDROXYLASE-RELATED"/>
    <property type="match status" value="1"/>
</dbReference>
<dbReference type="PANTHER" id="PTHR10696:SF25">
    <property type="entry name" value="OXIDOREDUCTASE AIM17-RELATED"/>
    <property type="match status" value="1"/>
</dbReference>
<dbReference type="Pfam" id="PF02668">
    <property type="entry name" value="TauD"/>
    <property type="match status" value="1"/>
</dbReference>
<dbReference type="SUPFAM" id="SSF51197">
    <property type="entry name" value="Clavaminate synthase-like"/>
    <property type="match status" value="1"/>
</dbReference>
<proteinExistence type="evidence at protein level"/>
<protein>
    <recommendedName>
        <fullName>Probable oxidoreductase AIM17</fullName>
        <ecNumber>1.14.11.-</ecNumber>
    </recommendedName>
    <alternativeName>
        <fullName>Altered inheritance of mitochondria protein 17, mitochondrial</fullName>
    </alternativeName>
    <alternativeName>
        <fullName>Found in mitochondrial proteome protein 12</fullName>
    </alternativeName>
</protein>
<gene>
    <name type="primary">AIM17</name>
    <name type="synonym">FMP12</name>
    <name type="ordered locus">YHL021C</name>
</gene>
<accession>P23180</accession>
<accession>D3DKP4</accession>
<evidence type="ECO:0000250" key="1"/>
<evidence type="ECO:0000255" key="2"/>
<evidence type="ECO:0000269" key="3">
    <source>
    </source>
</evidence>
<evidence type="ECO:0000269" key="4">
    <source>
    </source>
</evidence>
<evidence type="ECO:0000269" key="5">
    <source>
    </source>
</evidence>
<evidence type="ECO:0000269" key="6">
    <source>
    </source>
</evidence>
<evidence type="ECO:0000305" key="7"/>
<sequence length="465" mass="53135">MLRSNLCRGSRILARLTTTPRTYTSAATAAAANRGHIIKTYFNRDSTTITFSMEESSKPVSVCFNNVFLRDASHSAKLVTTGELYHNEKLTAPQDIQISEDGKSLVVKWKDGGHHQFPLQFFIDYKGSSFVSPATRKQESRYRPQLWNKRILKDNVKDLLSVSYNEFIDPKDDSKLFQTLVNLQKFGIAFISGTPSSSSEGLTIQKICERIGPIRSTVHGEGTFDVNASQATSVNAHYANKDLPLHTDLPFLENVPGFQILQSLPATEGEDPNTRPMNYFVDAFYATRNVRESDFEAYEALQIVPVNYIYENGDKRYYQSKPLIEHHDINEDNTLLGNYEALIKCINYSPPYQAPFTFGIYDKPSDLNNNLDLNLITTPAKLTERFLFKSFIRGLNLFESHINDFNNQFRLQLPENCCVIFNNRRILHANSLTSSNQQWLKGCYFDSDTFKSKLKFLEEKFPHDK</sequence>
<comment type="cofactor">
    <cofactor evidence="1">
        <name>Fe(2+)</name>
        <dbReference type="ChEBI" id="CHEBI:29033"/>
    </cofactor>
    <text evidence="1">Binds 1 Fe(2+) ion per subunit.</text>
</comment>
<comment type="cofactor">
    <cofactor evidence="1">
        <name>L-ascorbate</name>
        <dbReference type="ChEBI" id="CHEBI:38290"/>
    </cofactor>
</comment>
<comment type="subcellular location">
    <subcellularLocation>
        <location evidence="3 6">Mitochondrion</location>
    </subcellularLocation>
</comment>
<comment type="disruption phenotype">
    <text evidence="5">Increases frequency of mitochondrial genome loss.</text>
</comment>
<comment type="miscellaneous">
    <text evidence="4">Present with 5800 molecules/cell in log phase SD medium.</text>
</comment>
<comment type="miscellaneous">
    <text>Accumulates as a carbonylated protein in absence of PIM1, suggesting that the PIM1 protease is responsible for the degradation of its oxidized form in mitochondria.</text>
</comment>
<comment type="similarity">
    <text evidence="7">Belongs to the gamma-BBH/TMLD family.</text>
</comment>
<name>AIM17_YEAST</name>
<reference key="1">
    <citation type="journal article" date="1994" name="Science">
        <title>Complete nucleotide sequence of Saccharomyces cerevisiae chromosome VIII.</title>
        <authorList>
            <person name="Johnston M."/>
            <person name="Andrews S."/>
            <person name="Brinkman R."/>
            <person name="Cooper J."/>
            <person name="Ding H."/>
            <person name="Dover J."/>
            <person name="Du Z."/>
            <person name="Favello A."/>
            <person name="Fulton L."/>
            <person name="Gattung S."/>
            <person name="Geisel C."/>
            <person name="Kirsten J."/>
            <person name="Kucaba T."/>
            <person name="Hillier L.W."/>
            <person name="Jier M."/>
            <person name="Johnston L."/>
            <person name="Langston Y."/>
            <person name="Latreille P."/>
            <person name="Louis E.J."/>
            <person name="Macri C."/>
            <person name="Mardis E."/>
            <person name="Menezes S."/>
            <person name="Mouser L."/>
            <person name="Nhan M."/>
            <person name="Rifkin L."/>
            <person name="Riles L."/>
            <person name="St Peter H."/>
            <person name="Trevaskis E."/>
            <person name="Vaughan K."/>
            <person name="Vignati D."/>
            <person name="Wilcox L."/>
            <person name="Wohldman P."/>
            <person name="Waterston R."/>
            <person name="Wilson R."/>
            <person name="Vaudin M."/>
        </authorList>
    </citation>
    <scope>NUCLEOTIDE SEQUENCE [LARGE SCALE GENOMIC DNA]</scope>
    <source>
        <strain>ATCC 204508 / S288c</strain>
    </source>
</reference>
<reference key="2">
    <citation type="journal article" date="2014" name="G3 (Bethesda)">
        <title>The reference genome sequence of Saccharomyces cerevisiae: Then and now.</title>
        <authorList>
            <person name="Engel S.R."/>
            <person name="Dietrich F.S."/>
            <person name="Fisk D.G."/>
            <person name="Binkley G."/>
            <person name="Balakrishnan R."/>
            <person name="Costanzo M.C."/>
            <person name="Dwight S.S."/>
            <person name="Hitz B.C."/>
            <person name="Karra K."/>
            <person name="Nash R.S."/>
            <person name="Weng S."/>
            <person name="Wong E.D."/>
            <person name="Lloyd P."/>
            <person name="Skrzypek M.S."/>
            <person name="Miyasato S.R."/>
            <person name="Simison M."/>
            <person name="Cherry J.M."/>
        </authorList>
    </citation>
    <scope>GENOME REANNOTATION</scope>
    <source>
        <strain>ATCC 204508 / S288c</strain>
    </source>
</reference>
<reference key="3">
    <citation type="journal article" date="1987" name="Proc. Natl. Acad. Sci. U.S.A.">
        <title>Isolation, DNA sequence, and regulation of a meiosis-specific eukaryotic recombination gene.</title>
        <authorList>
            <person name="Atcheson C.L."/>
            <person name="Didomenico B."/>
            <person name="Frackman S."/>
            <person name="Esposito R.E."/>
            <person name="Elder R.T."/>
        </authorList>
    </citation>
    <scope>NUCLEOTIDE SEQUENCE [GENOMIC DNA] OF 366-465</scope>
</reference>
<reference key="4">
    <citation type="journal article" date="2003" name="Nature">
        <title>Global analysis of protein localization in budding yeast.</title>
        <authorList>
            <person name="Huh W.-K."/>
            <person name="Falvo J.V."/>
            <person name="Gerke L.C."/>
            <person name="Carroll A.S."/>
            <person name="Howson R.W."/>
            <person name="Weissman J.S."/>
            <person name="O'Shea E.K."/>
        </authorList>
    </citation>
    <scope>SUBCELLULAR LOCATION [LARGE SCALE ANALYSIS]</scope>
</reference>
<reference key="5">
    <citation type="journal article" date="2003" name="Nature">
        <title>Global analysis of protein expression in yeast.</title>
        <authorList>
            <person name="Ghaemmaghami S."/>
            <person name="Huh W.-K."/>
            <person name="Bower K."/>
            <person name="Howson R.W."/>
            <person name="Belle A."/>
            <person name="Dephoure N."/>
            <person name="O'Shea E.K."/>
            <person name="Weissman J.S."/>
        </authorList>
    </citation>
    <scope>LEVEL OF PROTEIN EXPRESSION [LARGE SCALE ANALYSIS]</scope>
</reference>
<reference key="6">
    <citation type="journal article" date="2009" name="PLoS Genet.">
        <title>Computationally driven, quantitative experiments discover genes required for mitochondrial biogenesis.</title>
        <authorList>
            <person name="Hess D.C."/>
            <person name="Myers C.L."/>
            <person name="Huttenhower C."/>
            <person name="Hibbs M.A."/>
            <person name="Hayes A.P."/>
            <person name="Paw J."/>
            <person name="Clore J.J."/>
            <person name="Mendoza R.M."/>
            <person name="Luis B.S."/>
            <person name="Nislow C."/>
            <person name="Giaever G."/>
            <person name="Costanzo M."/>
            <person name="Troyanskaya O.G."/>
            <person name="Caudy A.A."/>
        </authorList>
    </citation>
    <scope>DISRUPTION PHENOTYPE</scope>
</reference>
<reference key="7">
    <citation type="journal article" date="2010" name="J. Biol. Chem.">
        <title>Identification of novel oxidized protein substrates and physiological partners of the mitochondrial ATP-dependent Lon-like protease Pim1.</title>
        <authorList>
            <person name="Bayot A."/>
            <person name="Gareil M."/>
            <person name="Rogowska-Wrzesinska A."/>
            <person name="Roepstorff P."/>
            <person name="Friguet B."/>
            <person name="Bulteau A.L."/>
        </authorList>
    </citation>
    <scope>SUBCELLULAR LOCATION</scope>
    <scope>IDENTIFICATION BY MASS SPECTROMETRY</scope>
    <scope>DEGRADATION</scope>
</reference>
<keyword id="KW-0223">Dioxygenase</keyword>
<keyword id="KW-0408">Iron</keyword>
<keyword id="KW-0479">Metal-binding</keyword>
<keyword id="KW-0496">Mitochondrion</keyword>
<keyword id="KW-0560">Oxidoreductase</keyword>
<keyword id="KW-1185">Reference proteome</keyword>
<keyword id="KW-0809">Transit peptide</keyword>
<organism>
    <name type="scientific">Saccharomyces cerevisiae (strain ATCC 204508 / S288c)</name>
    <name type="common">Baker's yeast</name>
    <dbReference type="NCBI Taxonomy" id="559292"/>
    <lineage>
        <taxon>Eukaryota</taxon>
        <taxon>Fungi</taxon>
        <taxon>Dikarya</taxon>
        <taxon>Ascomycota</taxon>
        <taxon>Saccharomycotina</taxon>
        <taxon>Saccharomycetes</taxon>
        <taxon>Saccharomycetales</taxon>
        <taxon>Saccharomycetaceae</taxon>
        <taxon>Saccharomyces</taxon>
    </lineage>
</organism>